<proteinExistence type="inferred from homology"/>
<sequence length="245" mass="25802">MALKFTTAEGQAITPITVPVMREIDRLAVQETGPNLYQMMENAGRNLAELTLTLLGESRNGSRVLVLAGTGGNGGGGLCAGRHLANHGLAVDYTLGDRDGLSEVTGRQLSLLELAGGREVDPVSPETGEADIVLDALIGYSLLGAPSGRSAELIRWLNAGNSRIISLDVPSGVDADSGLTPGEYVRPQTTLTLAWPKTGLLPRLTGELWLGDLGIPPAVYTRAGLKNFRSPFIAGYLVRLTASEQ</sequence>
<organism>
    <name type="scientific">Dehalogenimonas lykanthroporepellens (strain ATCC BAA-1523 / JCM 15061 / BL-DC-9)</name>
    <dbReference type="NCBI Taxonomy" id="552811"/>
    <lineage>
        <taxon>Bacteria</taxon>
        <taxon>Bacillati</taxon>
        <taxon>Chloroflexota</taxon>
        <taxon>Dehalococcoidia</taxon>
        <taxon>Dehalococcoidales</taxon>
        <taxon>Dehalococcoidaceae</taxon>
        <taxon>Dehalogenimonas</taxon>
    </lineage>
</organism>
<accession>D8K3Q1</accession>
<feature type="chain" id="PRO_0000416351" description="NAD(P)H-hydrate epimerase">
    <location>
        <begin position="1"/>
        <end position="245"/>
    </location>
</feature>
<feature type="domain" description="YjeF N-terminal" evidence="1">
    <location>
        <begin position="21"/>
        <end position="221"/>
    </location>
</feature>
<feature type="binding site" evidence="1">
    <location>
        <begin position="72"/>
        <end position="76"/>
    </location>
    <ligand>
        <name>(6S)-NADPHX</name>
        <dbReference type="ChEBI" id="CHEBI:64076"/>
    </ligand>
</feature>
<feature type="binding site" evidence="1">
    <location>
        <position position="73"/>
    </location>
    <ligand>
        <name>K(+)</name>
        <dbReference type="ChEBI" id="CHEBI:29103"/>
    </ligand>
</feature>
<feature type="binding site" evidence="1">
    <location>
        <position position="135"/>
    </location>
    <ligand>
        <name>K(+)</name>
        <dbReference type="ChEBI" id="CHEBI:29103"/>
    </ligand>
</feature>
<feature type="binding site" evidence="1">
    <location>
        <begin position="139"/>
        <end position="145"/>
    </location>
    <ligand>
        <name>(6S)-NADPHX</name>
        <dbReference type="ChEBI" id="CHEBI:64076"/>
    </ligand>
</feature>
<feature type="binding site" evidence="1">
    <location>
        <position position="168"/>
    </location>
    <ligand>
        <name>(6S)-NADPHX</name>
        <dbReference type="ChEBI" id="CHEBI:64076"/>
    </ligand>
</feature>
<feature type="binding site" evidence="1">
    <location>
        <position position="171"/>
    </location>
    <ligand>
        <name>K(+)</name>
        <dbReference type="ChEBI" id="CHEBI:29103"/>
    </ligand>
</feature>
<reference key="1">
    <citation type="submission" date="2010-06" db="EMBL/GenBank/DDBJ databases">
        <title>Complete sequence of Dehalogenimonas lykanthroporepellens BL-DC-9.</title>
        <authorList>
            <consortium name="US DOE Joint Genome Institute"/>
            <person name="Lucas S."/>
            <person name="Copeland A."/>
            <person name="Lapidus A."/>
            <person name="Cheng J.-F."/>
            <person name="Bruce D."/>
            <person name="Goodwin L."/>
            <person name="Pitluck S."/>
            <person name="Daligault H."/>
            <person name="Detter J.C."/>
            <person name="Han C."/>
            <person name="Tapia R."/>
            <person name="Land M."/>
            <person name="Hauser L."/>
            <person name="Kyrpides N."/>
            <person name="Ovchinnikova G."/>
            <person name="Rainey F.A."/>
            <person name="Yan J."/>
            <person name="da Costa M.S."/>
            <person name="Moe W.M."/>
            <person name="Woyke T."/>
        </authorList>
    </citation>
    <scope>NUCLEOTIDE SEQUENCE [LARGE SCALE GENOMIC DNA]</scope>
    <source>
        <strain>ATCC BAA-1523 / JCM 15061 / BL-DC-9</strain>
    </source>
</reference>
<name>NNRE_DEHLB</name>
<protein>
    <recommendedName>
        <fullName evidence="1">NAD(P)H-hydrate epimerase</fullName>
        <ecNumber evidence="1">5.1.99.6</ecNumber>
    </recommendedName>
    <alternativeName>
        <fullName evidence="1">NAD(P)HX epimerase</fullName>
    </alternativeName>
</protein>
<comment type="function">
    <text evidence="1">Catalyzes the epimerization of the S- and R-forms of NAD(P)HX, a damaged form of NAD(P)H that is a result of enzymatic or heat-dependent hydration. This is a prerequisite for the S-specific NAD(P)H-hydrate dehydratase to allow the repair of both epimers of NAD(P)HX.</text>
</comment>
<comment type="catalytic activity">
    <reaction evidence="1">
        <text>(6R)-NADHX = (6S)-NADHX</text>
        <dbReference type="Rhea" id="RHEA:32215"/>
        <dbReference type="ChEBI" id="CHEBI:64074"/>
        <dbReference type="ChEBI" id="CHEBI:64075"/>
        <dbReference type="EC" id="5.1.99.6"/>
    </reaction>
</comment>
<comment type="catalytic activity">
    <reaction evidence="1">
        <text>(6R)-NADPHX = (6S)-NADPHX</text>
        <dbReference type="Rhea" id="RHEA:32227"/>
        <dbReference type="ChEBI" id="CHEBI:64076"/>
        <dbReference type="ChEBI" id="CHEBI:64077"/>
        <dbReference type="EC" id="5.1.99.6"/>
    </reaction>
</comment>
<comment type="cofactor">
    <cofactor evidence="1">
        <name>K(+)</name>
        <dbReference type="ChEBI" id="CHEBI:29103"/>
    </cofactor>
    <text evidence="1">Binds 1 potassium ion per subunit.</text>
</comment>
<comment type="similarity">
    <text evidence="1">Belongs to the NnrE/AIBP family.</text>
</comment>
<evidence type="ECO:0000255" key="1">
    <source>
        <dbReference type="HAMAP-Rule" id="MF_01966"/>
    </source>
</evidence>
<dbReference type="EC" id="5.1.99.6" evidence="1"/>
<dbReference type="EMBL" id="CP002084">
    <property type="protein sequence ID" value="ADJ25570.1"/>
    <property type="molecule type" value="Genomic_DNA"/>
</dbReference>
<dbReference type="SMR" id="D8K3Q1"/>
<dbReference type="STRING" id="552811.Dehly_0243"/>
<dbReference type="KEGG" id="dly:Dehly_0243"/>
<dbReference type="eggNOG" id="COG0062">
    <property type="taxonomic scope" value="Bacteria"/>
</dbReference>
<dbReference type="HOGENOM" id="CLU_024853_0_0_0"/>
<dbReference type="OrthoDB" id="9806925at2"/>
<dbReference type="GO" id="GO:0000932">
    <property type="term" value="C:P-body"/>
    <property type="evidence" value="ECO:0007669"/>
    <property type="project" value="TreeGrafter"/>
</dbReference>
<dbReference type="GO" id="GO:0046872">
    <property type="term" value="F:metal ion binding"/>
    <property type="evidence" value="ECO:0007669"/>
    <property type="project" value="UniProtKB-KW"/>
</dbReference>
<dbReference type="GO" id="GO:0003729">
    <property type="term" value="F:mRNA binding"/>
    <property type="evidence" value="ECO:0007669"/>
    <property type="project" value="TreeGrafter"/>
</dbReference>
<dbReference type="GO" id="GO:0052856">
    <property type="term" value="F:NAD(P)HX epimerase activity"/>
    <property type="evidence" value="ECO:0007669"/>
    <property type="project" value="UniProtKB-UniRule"/>
</dbReference>
<dbReference type="GO" id="GO:0000166">
    <property type="term" value="F:nucleotide binding"/>
    <property type="evidence" value="ECO:0007669"/>
    <property type="project" value="UniProtKB-KW"/>
</dbReference>
<dbReference type="GO" id="GO:0031087">
    <property type="term" value="P:deadenylation-independent decapping of nuclear-transcribed mRNA"/>
    <property type="evidence" value="ECO:0007669"/>
    <property type="project" value="TreeGrafter"/>
</dbReference>
<dbReference type="GO" id="GO:0033962">
    <property type="term" value="P:P-body assembly"/>
    <property type="evidence" value="ECO:0007669"/>
    <property type="project" value="TreeGrafter"/>
</dbReference>
<dbReference type="Gene3D" id="3.40.50.10260">
    <property type="entry name" value="YjeF N-terminal domain"/>
    <property type="match status" value="1"/>
</dbReference>
<dbReference type="HAMAP" id="MF_01966">
    <property type="entry name" value="NADHX_epimerase"/>
    <property type="match status" value="1"/>
</dbReference>
<dbReference type="InterPro" id="IPR004443">
    <property type="entry name" value="YjeF_N_dom"/>
</dbReference>
<dbReference type="InterPro" id="IPR036652">
    <property type="entry name" value="YjeF_N_dom_sf"/>
</dbReference>
<dbReference type="NCBIfam" id="TIGR00197">
    <property type="entry name" value="yjeF_nterm"/>
    <property type="match status" value="1"/>
</dbReference>
<dbReference type="PANTHER" id="PTHR13612">
    <property type="entry name" value="ENHANCER OF MRNA-DECAPPING PROTEIN 3"/>
    <property type="match status" value="1"/>
</dbReference>
<dbReference type="PANTHER" id="PTHR13612:SF0">
    <property type="entry name" value="ENHANCER OF MRNA-DECAPPING PROTEIN 3"/>
    <property type="match status" value="1"/>
</dbReference>
<dbReference type="Pfam" id="PF03853">
    <property type="entry name" value="YjeF_N"/>
    <property type="match status" value="1"/>
</dbReference>
<dbReference type="SUPFAM" id="SSF64153">
    <property type="entry name" value="YjeF N-terminal domain-like"/>
    <property type="match status" value="1"/>
</dbReference>
<dbReference type="PROSITE" id="PS51385">
    <property type="entry name" value="YJEF_N"/>
    <property type="match status" value="1"/>
</dbReference>
<keyword id="KW-0413">Isomerase</keyword>
<keyword id="KW-0479">Metal-binding</keyword>
<keyword id="KW-0520">NAD</keyword>
<keyword id="KW-0521">NADP</keyword>
<keyword id="KW-0547">Nucleotide-binding</keyword>
<keyword id="KW-0630">Potassium</keyword>
<gene>
    <name evidence="1" type="primary">nnrE</name>
    <name type="ordered locus">Dehly_0243</name>
</gene>